<name>MYCA_THET4</name>
<comment type="function">
    <text evidence="6">Hybrid PKS-NRPS synthetase; part of the gene cluster that mediates the biosynthesis of myceliothermophins, mycotoxins that contain a trans-fused decalin ring system connected to a conjugated 3-pyrrolin-2-one moiety and that have potential anti-tumor properties (PubMed:27960349). The polyketide synthase module (PKS) of the PKS-NRPS mycA is responsible for the synthesis of the octaketide backbone (PubMed:27960349). The downstream nonribosomal peptide synthetase (NRPS) module then amidates the carboxyl end of the octaketide with a leucine (PubMed:27960349). A reductase-like domain (R) at the C-terminus catalyzes the reductive release of the polyketide-amino acid intermediate (PubMed:27960349). Because mycA lacks a designated enoylreductase (ER) domain, the required activity is provided the enoyl reductase mycC (PubMed:27960349). Following mycA-catalyzed construction and release of aminoacyl polyketide aldehyde, Knoevenagel condensation yields the expected ketone (PubMed:27960349). This C18 keto acyclic precursor is the substrate of the Diels-Alderase mycB, that catalyzes the Diels-Alder cycloaddition to produce myceliothermophin E (PubMed:27960349). A yet unknown oxygenase involved in the production of myceliothermophin A, via substitution with a hydroxyl group at the C21, has still to be identified (PubMed:27960349).</text>
</comment>
<comment type="catalytic activity">
    <reaction evidence="6">
        <text>L-leucine + 8 malonyl-CoA + 4 S-adenosyl-L-methionine + ATP + 9 NADPH + 12 H(+) = (5S)-5-(2-methylpropyl)-3-[(2E,6R,8E,10E,12E)-6,8,10,12-tetramethyltetradeca-2,8,10,12-tetraenoyl]-2,5-dihydro-1H-pyrrol-2-one + AMP + 4 S-adenosyl-L-homocysteine + 8 CO2 + diphosphate + 9 NADP(+) + 8 CoA + 7 H2O</text>
        <dbReference type="Rhea" id="RHEA:67288"/>
        <dbReference type="ChEBI" id="CHEBI:15377"/>
        <dbReference type="ChEBI" id="CHEBI:15378"/>
        <dbReference type="ChEBI" id="CHEBI:16526"/>
        <dbReference type="ChEBI" id="CHEBI:30616"/>
        <dbReference type="ChEBI" id="CHEBI:33019"/>
        <dbReference type="ChEBI" id="CHEBI:57287"/>
        <dbReference type="ChEBI" id="CHEBI:57384"/>
        <dbReference type="ChEBI" id="CHEBI:57427"/>
        <dbReference type="ChEBI" id="CHEBI:57783"/>
        <dbReference type="ChEBI" id="CHEBI:57856"/>
        <dbReference type="ChEBI" id="CHEBI:58349"/>
        <dbReference type="ChEBI" id="CHEBI:59789"/>
        <dbReference type="ChEBI" id="CHEBI:169930"/>
        <dbReference type="ChEBI" id="CHEBI:456215"/>
    </reaction>
    <physiologicalReaction direction="left-to-right" evidence="6">
        <dbReference type="Rhea" id="RHEA:67289"/>
    </physiologicalReaction>
</comment>
<comment type="pathway">
    <text evidence="6">Mycotoxin biosynthesis.</text>
</comment>
<comment type="domain">
    <text evidence="9">NRP synthetases are composed of discrete domains (adenylation (A), thiolation (T) or peptidyl carrier protein (PCP) and condensation (C) domains) which when grouped together are referred to as a single module. Each module is responsible for the recognition (via the A domain) and incorporation of a single amino acid into the growing peptide product. Thus, an NRP synthetase is generally composed of one or more modules and can terminate in a thioesterase domain (TE) that releases the newly synthesized peptide from the enzyme. Occasionally, epimerase (E) domains (responsible for L- to D-amino acid conversion) are present within the NRP synthetase (Probable). MycA also contains a polyketide synthase module (PKS) consisting of several catalytic domains including a ketoacyl synthase domain (KS), an acyl transferase domain (AT), a dehydratase domain (DH), a methyltransferase domain (MT), and a ketoreductase domain (KR) (Probable). Instead of a thioesterase domain (TE), mycA finishes with a reductase-like domain (R) for peptide release (Probable). MycA has the following architecture: KS-AT-DH-MT-KR-PCP-C-A-T-R (Probable).</text>
</comment>
<comment type="disruption phenotype">
    <text evidence="6">Completely abolishes the production of myceliothermophins A and E.</text>
</comment>
<comment type="similarity">
    <text evidence="8">In the C-terminal section; belongs to the NRP synthetase family.</text>
</comment>
<protein>
    <recommendedName>
        <fullName evidence="7">Hybrid PKS-NRPS synthetase mycA</fullName>
        <ecNumber evidence="6">2.3.1.-</ecNumber>
        <ecNumber evidence="6">6.3.2.-</ecNumber>
    </recommendedName>
    <alternativeName>
        <fullName evidence="7">Myceliothermophin biosynthesis cluster protein A</fullName>
    </alternativeName>
</protein>
<feature type="chain" id="PRO_0000450500" description="Hybrid PKS-NRPS synthetase mycA">
    <location>
        <begin position="1"/>
        <end position="4011"/>
    </location>
</feature>
<feature type="domain" description="Ketosynthase family 3 (KS3)" evidence="3 9">
    <location>
        <begin position="12"/>
        <end position="451"/>
    </location>
</feature>
<feature type="domain" description="PKS/mFAS DH" evidence="4">
    <location>
        <begin position="977"/>
        <end position="1290"/>
    </location>
</feature>
<feature type="domain" description="Carrier 1" evidence="2">
    <location>
        <begin position="2429"/>
        <end position="2504"/>
    </location>
</feature>
<feature type="domain" description="Carrier 2" evidence="2">
    <location>
        <begin position="3541"/>
        <end position="3621"/>
    </location>
</feature>
<feature type="region of interest" description="Acyl transferase (AT) domain" evidence="1 9">
    <location>
        <begin position="576"/>
        <end position="903"/>
    </location>
</feature>
<feature type="region of interest" description="N-terminal hotdog fold" evidence="4">
    <location>
        <begin position="977"/>
        <end position="1113"/>
    </location>
</feature>
<feature type="region of interest" description="Dehydratase (DH) domain" evidence="1 9">
    <location>
        <begin position="978"/>
        <end position="1287"/>
    </location>
</feature>
<feature type="region of interest" description="C-terminal hotdog fold" evidence="4">
    <location>
        <begin position="1135"/>
        <end position="1290"/>
    </location>
</feature>
<feature type="region of interest" description="Methyltransferase (MT) domain" evidence="1 9">
    <location>
        <begin position="1434"/>
        <end position="1626"/>
    </location>
</feature>
<feature type="region of interest" description="Ketoreductase (KR)domain" evidence="1 9">
    <location>
        <begin position="2138"/>
        <end position="2311"/>
    </location>
</feature>
<feature type="region of interest" description="Disordered" evidence="5">
    <location>
        <begin position="2519"/>
        <end position="2607"/>
    </location>
</feature>
<feature type="region of interest" description="Condensation" evidence="1 9">
    <location>
        <begin position="2604"/>
        <end position="2975"/>
    </location>
</feature>
<feature type="region of interest" description="Adenylation" evidence="1 9">
    <location>
        <begin position="3009"/>
        <end position="3414"/>
    </location>
</feature>
<feature type="region of interest" description="Disordered" evidence="5">
    <location>
        <begin position="3525"/>
        <end position="3544"/>
    </location>
</feature>
<feature type="region of interest" description="Reductase-like" evidence="1 9">
    <location>
        <begin position="3671"/>
        <end position="3978"/>
    </location>
</feature>
<feature type="compositionally biased region" description="Polar residues" evidence="5">
    <location>
        <begin position="2559"/>
        <end position="2578"/>
    </location>
</feature>
<feature type="compositionally biased region" description="Polar residues" evidence="5">
    <location>
        <begin position="3535"/>
        <end position="3544"/>
    </location>
</feature>
<feature type="active site" description="For beta-ketoacyl synthase activity" evidence="3">
    <location>
        <position position="185"/>
    </location>
</feature>
<feature type="active site" description="For beta-ketoacyl synthase activity" evidence="3">
    <location>
        <position position="324"/>
    </location>
</feature>
<feature type="active site" description="For beta-ketoacyl synthase activity" evidence="3">
    <location>
        <position position="373"/>
    </location>
</feature>
<feature type="active site" description="Proton acceptor; for dehydratase activity" evidence="4">
    <location>
        <position position="1009"/>
    </location>
</feature>
<feature type="active site" description="Proton donor; for dehydratase activity" evidence="4">
    <location>
        <position position="1195"/>
    </location>
</feature>
<feature type="modified residue" description="O-(pantetheine 4'-phosphoryl)serine" evidence="2">
    <location>
        <position position="2464"/>
    </location>
</feature>
<feature type="modified residue" description="O-(pantetheine 4'-phosphoryl)serine" evidence="2">
    <location>
        <position position="3581"/>
    </location>
</feature>
<dbReference type="EC" id="2.3.1.-" evidence="6"/>
<dbReference type="EC" id="6.3.2.-" evidence="6"/>
<dbReference type="EMBL" id="CP003003">
    <property type="protein sequence ID" value="AEO57197.1"/>
    <property type="molecule type" value="Genomic_DNA"/>
</dbReference>
<dbReference type="RefSeq" id="XP_003662442.1">
    <property type="nucleotide sequence ID" value="XM_003662394.1"/>
</dbReference>
<dbReference type="SMR" id="G2Q9A5"/>
<dbReference type="STRING" id="573729.G2Q9A5"/>
<dbReference type="GeneID" id="11512495"/>
<dbReference type="KEGG" id="mtm:MYCTH_78013"/>
<dbReference type="VEuPathDB" id="FungiDB:MYCTH_78013"/>
<dbReference type="eggNOG" id="KOG1178">
    <property type="taxonomic scope" value="Eukaryota"/>
</dbReference>
<dbReference type="eggNOG" id="KOG1202">
    <property type="taxonomic scope" value="Eukaryota"/>
</dbReference>
<dbReference type="HOGENOM" id="CLU_000022_37_4_1"/>
<dbReference type="InParanoid" id="G2Q9A5"/>
<dbReference type="OMA" id="KQLWFAS"/>
<dbReference type="OrthoDB" id="329835at2759"/>
<dbReference type="Proteomes" id="UP000007322">
    <property type="component" value="Chromosome 2"/>
</dbReference>
<dbReference type="GO" id="GO:0004315">
    <property type="term" value="F:3-oxoacyl-[acyl-carrier-protein] synthase activity"/>
    <property type="evidence" value="ECO:0007669"/>
    <property type="project" value="InterPro"/>
</dbReference>
<dbReference type="GO" id="GO:0004312">
    <property type="term" value="F:fatty acid synthase activity"/>
    <property type="evidence" value="ECO:0007669"/>
    <property type="project" value="TreeGrafter"/>
</dbReference>
<dbReference type="GO" id="GO:0016853">
    <property type="term" value="F:isomerase activity"/>
    <property type="evidence" value="ECO:0007669"/>
    <property type="project" value="UniProtKB-KW"/>
</dbReference>
<dbReference type="GO" id="GO:0016874">
    <property type="term" value="F:ligase activity"/>
    <property type="evidence" value="ECO:0007669"/>
    <property type="project" value="UniProtKB-KW"/>
</dbReference>
<dbReference type="GO" id="GO:0008168">
    <property type="term" value="F:methyltransferase activity"/>
    <property type="evidence" value="ECO:0007669"/>
    <property type="project" value="UniProtKB-KW"/>
</dbReference>
<dbReference type="GO" id="GO:0016491">
    <property type="term" value="F:oxidoreductase activity"/>
    <property type="evidence" value="ECO:0007669"/>
    <property type="project" value="UniProtKB-KW"/>
</dbReference>
<dbReference type="GO" id="GO:0031177">
    <property type="term" value="F:phosphopantetheine binding"/>
    <property type="evidence" value="ECO:0007669"/>
    <property type="project" value="InterPro"/>
</dbReference>
<dbReference type="GO" id="GO:0006633">
    <property type="term" value="P:fatty acid biosynthetic process"/>
    <property type="evidence" value="ECO:0007669"/>
    <property type="project" value="InterPro"/>
</dbReference>
<dbReference type="GO" id="GO:0032259">
    <property type="term" value="P:methylation"/>
    <property type="evidence" value="ECO:0007669"/>
    <property type="project" value="UniProtKB-KW"/>
</dbReference>
<dbReference type="GO" id="GO:0009403">
    <property type="term" value="P:toxin biosynthetic process"/>
    <property type="evidence" value="ECO:0007669"/>
    <property type="project" value="UniProtKB-ARBA"/>
</dbReference>
<dbReference type="CDD" id="cd05930">
    <property type="entry name" value="A_NRPS"/>
    <property type="match status" value="1"/>
</dbReference>
<dbReference type="CDD" id="cd02440">
    <property type="entry name" value="AdoMet_MTases"/>
    <property type="match status" value="1"/>
</dbReference>
<dbReference type="CDD" id="cd19532">
    <property type="entry name" value="C_PKS-NRPS"/>
    <property type="match status" value="1"/>
</dbReference>
<dbReference type="CDD" id="cd00833">
    <property type="entry name" value="PKS"/>
    <property type="match status" value="1"/>
</dbReference>
<dbReference type="FunFam" id="3.40.47.10:FF:000019">
    <property type="entry name" value="Polyketide synthase type I"/>
    <property type="match status" value="1"/>
</dbReference>
<dbReference type="Gene3D" id="3.30.300.30">
    <property type="match status" value="1"/>
</dbReference>
<dbReference type="Gene3D" id="3.40.47.10">
    <property type="match status" value="1"/>
</dbReference>
<dbReference type="Gene3D" id="1.10.1200.10">
    <property type="entry name" value="ACP-like"/>
    <property type="match status" value="2"/>
</dbReference>
<dbReference type="Gene3D" id="3.30.559.10">
    <property type="entry name" value="Chloramphenicol acetyltransferase-like domain"/>
    <property type="match status" value="1"/>
</dbReference>
<dbReference type="Gene3D" id="3.40.366.10">
    <property type="entry name" value="Malonyl-Coenzyme A Acyl Carrier Protein, domain 2"/>
    <property type="match status" value="1"/>
</dbReference>
<dbReference type="Gene3D" id="3.40.50.12780">
    <property type="entry name" value="N-terminal domain of ligase-like"/>
    <property type="match status" value="1"/>
</dbReference>
<dbReference type="Gene3D" id="3.40.50.720">
    <property type="entry name" value="NAD(P)-binding Rossmann-like Domain"/>
    <property type="match status" value="3"/>
</dbReference>
<dbReference type="Gene3D" id="3.30.559.30">
    <property type="entry name" value="Nonribosomal peptide synthetase, condensation domain"/>
    <property type="match status" value="2"/>
</dbReference>
<dbReference type="Gene3D" id="3.10.129.110">
    <property type="entry name" value="Polyketide synthase dehydratase"/>
    <property type="match status" value="1"/>
</dbReference>
<dbReference type="Gene3D" id="3.40.50.150">
    <property type="entry name" value="Vaccinia Virus protein VP39"/>
    <property type="match status" value="1"/>
</dbReference>
<dbReference type="InterPro" id="IPR010071">
    <property type="entry name" value="AA_adenyl_dom"/>
</dbReference>
<dbReference type="InterPro" id="IPR001227">
    <property type="entry name" value="Ac_transferase_dom_sf"/>
</dbReference>
<dbReference type="InterPro" id="IPR036736">
    <property type="entry name" value="ACP-like_sf"/>
</dbReference>
<dbReference type="InterPro" id="IPR014043">
    <property type="entry name" value="Acyl_transferase_dom"/>
</dbReference>
<dbReference type="InterPro" id="IPR016035">
    <property type="entry name" value="Acyl_Trfase/lysoPLipase"/>
</dbReference>
<dbReference type="InterPro" id="IPR045851">
    <property type="entry name" value="AMP-bd_C_sf"/>
</dbReference>
<dbReference type="InterPro" id="IPR020845">
    <property type="entry name" value="AMP-binding_CS"/>
</dbReference>
<dbReference type="InterPro" id="IPR000873">
    <property type="entry name" value="AMP-dep_synth/lig_dom"/>
</dbReference>
<dbReference type="InterPro" id="IPR042099">
    <property type="entry name" value="ANL_N_sf"/>
</dbReference>
<dbReference type="InterPro" id="IPR023213">
    <property type="entry name" value="CAT-like_dom_sf"/>
</dbReference>
<dbReference type="InterPro" id="IPR001242">
    <property type="entry name" value="Condensatn"/>
</dbReference>
<dbReference type="InterPro" id="IPR013120">
    <property type="entry name" value="Far_NAD-bd"/>
</dbReference>
<dbReference type="InterPro" id="IPR018201">
    <property type="entry name" value="Ketoacyl_synth_AS"/>
</dbReference>
<dbReference type="InterPro" id="IPR014031">
    <property type="entry name" value="Ketoacyl_synth_C"/>
</dbReference>
<dbReference type="InterPro" id="IPR014030">
    <property type="entry name" value="Ketoacyl_synth_N"/>
</dbReference>
<dbReference type="InterPro" id="IPR016036">
    <property type="entry name" value="Malonyl_transacylase_ACP-bd"/>
</dbReference>
<dbReference type="InterPro" id="IPR013217">
    <property type="entry name" value="Methyltransf_12"/>
</dbReference>
<dbReference type="InterPro" id="IPR036291">
    <property type="entry name" value="NAD(P)-bd_dom_sf"/>
</dbReference>
<dbReference type="InterPro" id="IPR032821">
    <property type="entry name" value="PKS_assoc"/>
</dbReference>
<dbReference type="InterPro" id="IPR020841">
    <property type="entry name" value="PKS_Beta-ketoAc_synthase_dom"/>
</dbReference>
<dbReference type="InterPro" id="IPR042104">
    <property type="entry name" value="PKS_dehydratase_sf"/>
</dbReference>
<dbReference type="InterPro" id="IPR020807">
    <property type="entry name" value="PKS_DH"/>
</dbReference>
<dbReference type="InterPro" id="IPR049551">
    <property type="entry name" value="PKS_DH_C"/>
</dbReference>
<dbReference type="InterPro" id="IPR049552">
    <property type="entry name" value="PKS_DH_N"/>
</dbReference>
<dbReference type="InterPro" id="IPR013968">
    <property type="entry name" value="PKS_KR"/>
</dbReference>
<dbReference type="InterPro" id="IPR049900">
    <property type="entry name" value="PKS_mFAS_DH"/>
</dbReference>
<dbReference type="InterPro" id="IPR050091">
    <property type="entry name" value="PKS_NRPS_Biosynth_Enz"/>
</dbReference>
<dbReference type="InterPro" id="IPR020806">
    <property type="entry name" value="PKS_PP-bd"/>
</dbReference>
<dbReference type="InterPro" id="IPR009081">
    <property type="entry name" value="PP-bd_ACP"/>
</dbReference>
<dbReference type="InterPro" id="IPR006162">
    <property type="entry name" value="Ppantetheine_attach_site"/>
</dbReference>
<dbReference type="InterPro" id="IPR029063">
    <property type="entry name" value="SAM-dependent_MTases_sf"/>
</dbReference>
<dbReference type="InterPro" id="IPR016039">
    <property type="entry name" value="Thiolase-like"/>
</dbReference>
<dbReference type="NCBIfam" id="TIGR01733">
    <property type="entry name" value="AA-adenyl-dom"/>
    <property type="match status" value="1"/>
</dbReference>
<dbReference type="PANTHER" id="PTHR43775">
    <property type="entry name" value="FATTY ACID SYNTHASE"/>
    <property type="match status" value="1"/>
</dbReference>
<dbReference type="PANTHER" id="PTHR43775:SF37">
    <property type="entry name" value="SI:DKEY-61P9.11"/>
    <property type="match status" value="1"/>
</dbReference>
<dbReference type="Pfam" id="PF00698">
    <property type="entry name" value="Acyl_transf_1"/>
    <property type="match status" value="1"/>
</dbReference>
<dbReference type="Pfam" id="PF00501">
    <property type="entry name" value="AMP-binding"/>
    <property type="match status" value="1"/>
</dbReference>
<dbReference type="Pfam" id="PF00668">
    <property type="entry name" value="Condensation"/>
    <property type="match status" value="1"/>
</dbReference>
<dbReference type="Pfam" id="PF16197">
    <property type="entry name" value="KAsynt_C_assoc"/>
    <property type="match status" value="1"/>
</dbReference>
<dbReference type="Pfam" id="PF00109">
    <property type="entry name" value="ketoacyl-synt"/>
    <property type="match status" value="1"/>
</dbReference>
<dbReference type="Pfam" id="PF02801">
    <property type="entry name" value="Ketoacyl-synt_C"/>
    <property type="match status" value="1"/>
</dbReference>
<dbReference type="Pfam" id="PF08659">
    <property type="entry name" value="KR"/>
    <property type="match status" value="1"/>
</dbReference>
<dbReference type="Pfam" id="PF08242">
    <property type="entry name" value="Methyltransf_12"/>
    <property type="match status" value="1"/>
</dbReference>
<dbReference type="Pfam" id="PF07993">
    <property type="entry name" value="NAD_binding_4"/>
    <property type="match status" value="1"/>
</dbReference>
<dbReference type="Pfam" id="PF21089">
    <property type="entry name" value="PKS_DH_N"/>
    <property type="match status" value="1"/>
</dbReference>
<dbReference type="Pfam" id="PF00550">
    <property type="entry name" value="PP-binding"/>
    <property type="match status" value="2"/>
</dbReference>
<dbReference type="Pfam" id="PF14765">
    <property type="entry name" value="PS-DH"/>
    <property type="match status" value="1"/>
</dbReference>
<dbReference type="SMART" id="SM00827">
    <property type="entry name" value="PKS_AT"/>
    <property type="match status" value="1"/>
</dbReference>
<dbReference type="SMART" id="SM00826">
    <property type="entry name" value="PKS_DH"/>
    <property type="match status" value="1"/>
</dbReference>
<dbReference type="SMART" id="SM00822">
    <property type="entry name" value="PKS_KR"/>
    <property type="match status" value="1"/>
</dbReference>
<dbReference type="SMART" id="SM00825">
    <property type="entry name" value="PKS_KS"/>
    <property type="match status" value="1"/>
</dbReference>
<dbReference type="SMART" id="SM00823">
    <property type="entry name" value="PKS_PP"/>
    <property type="match status" value="2"/>
</dbReference>
<dbReference type="SUPFAM" id="SSF56801">
    <property type="entry name" value="Acetyl-CoA synthetase-like"/>
    <property type="match status" value="1"/>
</dbReference>
<dbReference type="SUPFAM" id="SSF47336">
    <property type="entry name" value="ACP-like"/>
    <property type="match status" value="2"/>
</dbReference>
<dbReference type="SUPFAM" id="SSF52777">
    <property type="entry name" value="CoA-dependent acyltransferases"/>
    <property type="match status" value="2"/>
</dbReference>
<dbReference type="SUPFAM" id="SSF52151">
    <property type="entry name" value="FabD/lysophospholipase-like"/>
    <property type="match status" value="1"/>
</dbReference>
<dbReference type="SUPFAM" id="SSF51735">
    <property type="entry name" value="NAD(P)-binding Rossmann-fold domains"/>
    <property type="match status" value="3"/>
</dbReference>
<dbReference type="SUPFAM" id="SSF55048">
    <property type="entry name" value="Probable ACP-binding domain of malonyl-CoA ACP transacylase"/>
    <property type="match status" value="1"/>
</dbReference>
<dbReference type="SUPFAM" id="SSF53335">
    <property type="entry name" value="S-adenosyl-L-methionine-dependent methyltransferases"/>
    <property type="match status" value="1"/>
</dbReference>
<dbReference type="SUPFAM" id="SSF53901">
    <property type="entry name" value="Thiolase-like"/>
    <property type="match status" value="1"/>
</dbReference>
<dbReference type="PROSITE" id="PS00455">
    <property type="entry name" value="AMP_BINDING"/>
    <property type="match status" value="1"/>
</dbReference>
<dbReference type="PROSITE" id="PS50075">
    <property type="entry name" value="CARRIER"/>
    <property type="match status" value="2"/>
</dbReference>
<dbReference type="PROSITE" id="PS00606">
    <property type="entry name" value="KS3_1"/>
    <property type="match status" value="1"/>
</dbReference>
<dbReference type="PROSITE" id="PS52004">
    <property type="entry name" value="KS3_2"/>
    <property type="match status" value="1"/>
</dbReference>
<dbReference type="PROSITE" id="PS00012">
    <property type="entry name" value="PHOSPHOPANTETHEINE"/>
    <property type="match status" value="1"/>
</dbReference>
<dbReference type="PROSITE" id="PS52019">
    <property type="entry name" value="PKS_MFAS_DH"/>
    <property type="match status" value="1"/>
</dbReference>
<keyword id="KW-0012">Acyltransferase</keyword>
<keyword id="KW-0413">Isomerase</keyword>
<keyword id="KW-0436">Ligase</keyword>
<keyword id="KW-0489">Methyltransferase</keyword>
<keyword id="KW-0511">Multifunctional enzyme</keyword>
<keyword id="KW-0521">NADP</keyword>
<keyword id="KW-0560">Oxidoreductase</keyword>
<keyword id="KW-0596">Phosphopantetheine</keyword>
<keyword id="KW-0597">Phosphoprotein</keyword>
<keyword id="KW-1185">Reference proteome</keyword>
<keyword id="KW-0677">Repeat</keyword>
<keyword id="KW-0949">S-adenosyl-L-methionine</keyword>
<keyword id="KW-0808">Transferase</keyword>
<gene>
    <name evidence="7" type="primary">mycA</name>
    <name type="ORF">MYCTH_78013</name>
</gene>
<reference key="1">
    <citation type="journal article" date="2011" name="Nat. Biotechnol.">
        <title>Comparative genomic analysis of the thermophilic biomass-degrading fungi Myceliophthora thermophila and Thielavia terrestris.</title>
        <authorList>
            <person name="Berka R.M."/>
            <person name="Grigoriev I.V."/>
            <person name="Otillar R."/>
            <person name="Salamov A."/>
            <person name="Grimwood J."/>
            <person name="Reid I."/>
            <person name="Ishmael N."/>
            <person name="John T."/>
            <person name="Darmond C."/>
            <person name="Moisan M.-C."/>
            <person name="Henrissat B."/>
            <person name="Coutinho P.M."/>
            <person name="Lombard V."/>
            <person name="Natvig D.O."/>
            <person name="Lindquist E."/>
            <person name="Schmutz J."/>
            <person name="Lucas S."/>
            <person name="Harris P."/>
            <person name="Powlowski J."/>
            <person name="Bellemare A."/>
            <person name="Taylor D."/>
            <person name="Butler G."/>
            <person name="de Vries R.P."/>
            <person name="Allijn I.E."/>
            <person name="van den Brink J."/>
            <person name="Ushinsky S."/>
            <person name="Storms R."/>
            <person name="Powell A.J."/>
            <person name="Paulsen I.T."/>
            <person name="Elbourne L.D.H."/>
            <person name="Baker S.E."/>
            <person name="Magnuson J."/>
            <person name="LaBoissiere S."/>
            <person name="Clutterbuck A.J."/>
            <person name="Martinez D."/>
            <person name="Wogulis M."/>
            <person name="de Leon A.L."/>
            <person name="Rey M.W."/>
            <person name="Tsang A."/>
        </authorList>
    </citation>
    <scope>NUCLEOTIDE SEQUENCE [LARGE SCALE GENOMIC DNA]</scope>
    <source>
        <strain>ATCC 42464 / BCRC 31852 / DSM 1799</strain>
    </source>
</reference>
<reference key="2">
    <citation type="journal article" date="2016" name="J. Am. Chem. Soc.">
        <title>Biochemical characterization of a eukaryotic decalin-forming Diels-Alderase.</title>
        <authorList>
            <person name="Li L."/>
            <person name="Yu P."/>
            <person name="Tang M.C."/>
            <person name="Zou Y."/>
            <person name="Gao S.S."/>
            <person name="Hung Y.S."/>
            <person name="Zhao M."/>
            <person name="Watanabe K."/>
            <person name="Houk K.N."/>
            <person name="Tang Y."/>
        </authorList>
    </citation>
    <scope>FUNCTION</scope>
    <scope>DOMAIN</scope>
    <scope>DISRUPTION PHENOTYPE</scope>
    <scope>CATALYTIC ACTIVITY</scope>
    <scope>PATHWAY</scope>
</reference>
<sequence length="4011" mass="434115">MVQTPRQKKFGNEPIAIIGSACRFPGAASTPSKLWELLRKPKDLLTKIPPNRFNADSFYHPDGAHHGASNVTESYFLEEDPRLFDAAFFNVKPVEAHSIDPQHRMLLEVVYESLEAAGQSIEGLAKSQTGVFVGLMCADFSDHILRDLDAIPTYMATGTARSLISNRISYFFDWHGPSMTIDTACSSSLFAVHQAVQLLRSGDSDLAVAAGSNLILGPELYIGESKLKMLSPTGRSRMWDADADGYARGEGVAAVILKRLSDAIRDGDHIESIIRESGINSDGRTKGLTMPNELAQADLIVRTYQKAGLDPTKEEERCQYFEAHGTGTEAGDCREAEGISRAFFGYQGGNEGPAPPSQSEKLYVGSIKTVVGHTEGTAGLAGLLKASLAIQHSTIPPNMLFERLSPKVAPFYKGVEIATEAKPWPKASDVRRASVNSFGFGGANAHVILENYEPPAVAAAGTGAGAGDAASQTSFTPFVFSAASETALEGVLEAYAAHLRENPDLPLRDLSYTLHSRRSALGVRAALPAVASTQQLANSISDHLELARAGRNDKSAGQGASIGSRPIAATPRLLGVFTGQGAQWAAMGKELIQGSAFVRDRIKSLESALSDLPASARASWSLTDELLADAASSRLGEALLAQPLCTAVQIVLVDLLREAGIEFAAVVGHSSGEIAAAYAARIISAEEAIKIAYYRGLCVEEHVKTEGAMMAVGTSYEDATELCNLDAFSGRLGIAACNSPSSVTLSGDAAAIREAKDILDDEKKFARPLKVNKAYHSHHMAACSAPYKQALEACNIEPRQLAEEEGGCVWYSSVYPGTAMGTTAAHIEDLKGEYWKDNMLRPVLFAQALETAIERNEDSPFNLVIEVGPHPALKGPASETLTALYGKKQLPLPPYTGTLSRGSGDIAALSVTLGTAWSRFGSPFVNFAQYEALLTGEPRSARKVVPNLPTYKWDHDKVFWHDTRLSRAMRNRKELPNPLLGRRIPDGVTDEMRWRNIIRPSELPWISGHQLQGQMVYPAAAYLSTAIEACAFLAEGSVVESVEIRDFDLGKALVFDGNTEQTGVETLFSLSNIVKKGPKQITANFAFHAALGADADVLSRLGSGRVIVTLAGTGTGAGTGRLLLPPQRAPEPADTAEVREDEFYASLEKLGYEYTNDFRALSGMRRKLDHGSAYVRVPGHELAADAVLVHPALLDCALQAIFLAYWYPNDGSLDQLQVPTGIASLTVNTSLCRQDLAEGVRLPLESFLTEDPLSTATIGGDVEVYGRDGRTPLIQVQGVRITPLATRTGQADRQLFMENVWGPGAPDGTLAADNRAGAADFELASDLERLTIYFMRKLVRDIPPSQRQGLEWHHEALFDFVEHVLEQTANGRQRFCKPEWLDDTWESISHIRAKHPDSIEVELTHAVGENLAAAVRGETQILQHMFKDNLLNRYYVEALGIRETTAFLARTVAQIVHRYPHMDILEIGAGTGGATKAIFREIGRTFSSYTYTDISTGFFEKAQEVFAATADKMIFRALDIEKDVVEQGYREGAYDLIIGSLVLHATKSLDKTMRATRRLLKPGGYLVLLELTNLDVLRTGFAMSGLPGWWLGRDDGRRYSPCATSARWHQVLLGAGFSGIDTITPEVDVLPRPFSVIVSQAVEPRVNLLREPLSHPAESNASAADGGELVIVGGQSLATVILIDSVLDLTRHFGFAVTRLSSLDEFDAAAVSPTALVLNLAELDQPVFSNLTGETMRGLQSMLDYQRTILWVTQGCRAEQPYMSMSVGLGRTVALEAPGVKLQFLDLDISRKPNSKLVAEALIRLRFTRDEGSTRGILYSTEQELVEDDGRILVPRLLPIRPANERYNSSKRKITKLTEVGAESPALVLASTDAGYAVYEGASDDARAGASDDTAIIRVTASTLLPVIGNLYGVLGQEKDSGSWVLGLSSTNGSHVAVPRGQVRLVGDAILKEEAQQQQRLLLLALLAVEAQSSQILSAVPRDSKLLVNEPPAGLAGSLVRRAAERGTTVVFTASTTDAADLGLPHGHPVVSLSPLSSKRAVRAALPADVALFLDCSAEPEGVGLGSLIAACVPPSGQSIKLAELGEKLRQQPTLVDAPPSDTELASLPTLVDWSSGDKVPVSLQSVDSLIRFDGAKTYVLFGLTSDLGRSLVDWMASHGARNVVMTSRRPNIDPKWLEERRARGIRIQAFANDITDPAAVEDLVNSIRRSFPPIAGIMHGAMVLEDVPFSEMSLEIMNKVVRPKVMGTIHLDRLFQDEQLDFFVFFSSLASASGNRGQSNYSAANMYMTAKTFERRRKGLAASVLHLGAVMGIGYVMREASEIVFPAIRRAGFQWMDERAFRQCVAEAILAGRPDSGRSPEIVTGLRVINVDEEEPAPWMDNPRFQHCIVRGGTDSGAKKNQGGAAAGVKTRLLEAATPEEVLDIIRDSFLQKLQIMLQTELQTDDERANILAANAEDTGIDSLVAVEIRSWFQKEMDVDVPVLKILGGATMADLVAFAHEKLPEGLTPNLGNESAAAAAAAAAERSQSRVEITPAPDAVDTSRTSTTVFSAPPTLDPASSSTGSDHPTSVTSSGHTTPAHELETGLSPPSAPPCAPREQDVERTAPMSLGQSRFWFLRSYIEDQTTFNISFSVRLKGPLQVDKLESAIQTLGHRHQALRTAFVARPGQLLPDQAVLKRSLLRLEKRQIKEAAEASEAFEAMKNYVFAIERGESMRLVLLSLSPSDHFLVVGYHHINMDGASLEVFMADLMKLYTGRPLAPRPFQYPDFAAQQQLEVQQGKMDRDIAWWQDQLAGAALFRLLGTGDLCIGMADANRFEGDLASSVGMYLNLLPLRFRPSGDRTFRDTLKDVRRTAYAAMAHSHVPFDLVLNNLKIQRSTLHSPLFQAFINYRAGVAEKRSLGAVEGEGEQYHFGRSAYDISLDIMENPNSDPRLMFLVQEQLYSEHEANILADTYMHLLDLFARKPDSTLGSAPAFAPETAEEAIRLGRGNPVVSDWPQTIVHRVDDIIQRNPDTIAVREALGGRVWNYRQLRDRVGAIARALLAAGVTGGSRVALFQEPGFDWVSSLLAVMRVGAVFVPIDPGTPVERLAVIAAAARPAVALSHDATESAQEAALAVIRDAGGARVVNVSRGEGEGEGDVAGAGAPANLAQPDEAAVIFFTSGTTGVPKGAIVPHRGITNFMEHTCDIRGPEVVLFHSALGFDLAMWQCFSGLAHGGTLVVAPRSMRGDPVAITGLMAKEKITCTGATPSEYHTWIQYGFSKLAQSTSWRIAMTGGEQCTPKLVDDFRSLRLPGLRLWNCYGPSEVTVGSNQAEIPLSEPPQAPVTVGKAMPNRSVYILDDRLEPVCAGAPGEVVIGGVGVGLGYLGNDHLTAEKFVPDPFAPAGGSAKMYRTGDRGRLTRDGELEILGRIDGDSQIKLRGIRIEMQDVEQAILRSADGALASVCVTARGEPPTLVAHAVFRPDAPVPRRDRDAFLRRLASSLPLPQYMHPAVIVEIPSMPLNLHGKLDRRAVQELPTRVVAAKEEEEEKRPNGSSAAPLTQQELQLRSRVWERVIPEDVLSLYTVDRDTDFFHVGGNSMLLVEVQRRVKDEFGANLTIMRLFENSTLGAMAAAVHDAALESAGVDAAIDWEDETALTKDLADAVPSPEERAAAGRRRLDNNGPGGKVVVILTGATGFIGRELLARLLSSPDVAEVRCIAVRDPSRLADVVESNPGRVSVHAGDLTSVEETVGEEDEQRLFADAHAVIHCGADVSFLKTYATLRRANVGSTKALARLALRHGLDFHYVSTAATGRLLLVADPSSSPTARGDVFGEESVAAYPPPPGWLDHYVASKWASEAFLERAAARLGLRVWVHRPTSVTGPGAGETDVMSTVMRFAKKLRAVPVSSRWRGSLDFVPVETVADGIVGAVIRGGREHQQQQQQQETTPEEAGSVVPVKFLHHSGGLVIPIERLQSHLEEEDGVEYRTVPLGQWIEMAVAEGLNVLVAAYLASVDEMDTDIVFQAYVKG</sequence>
<organism>
    <name type="scientific">Thermothelomyces thermophilus (strain ATCC 42464 / BCRC 31852 / DSM 1799)</name>
    <name type="common">Sporotrichum thermophile</name>
    <dbReference type="NCBI Taxonomy" id="573729"/>
    <lineage>
        <taxon>Eukaryota</taxon>
        <taxon>Fungi</taxon>
        <taxon>Dikarya</taxon>
        <taxon>Ascomycota</taxon>
        <taxon>Pezizomycotina</taxon>
        <taxon>Sordariomycetes</taxon>
        <taxon>Sordariomycetidae</taxon>
        <taxon>Sordariales</taxon>
        <taxon>Chaetomiaceae</taxon>
        <taxon>Thermothelomyces</taxon>
    </lineage>
</organism>
<accession>G2Q9A5</accession>
<proteinExistence type="evidence at protein level"/>
<evidence type="ECO:0000255" key="1"/>
<evidence type="ECO:0000255" key="2">
    <source>
        <dbReference type="PROSITE-ProRule" id="PRU00258"/>
    </source>
</evidence>
<evidence type="ECO:0000255" key="3">
    <source>
        <dbReference type="PROSITE-ProRule" id="PRU01348"/>
    </source>
</evidence>
<evidence type="ECO:0000255" key="4">
    <source>
        <dbReference type="PROSITE-ProRule" id="PRU01363"/>
    </source>
</evidence>
<evidence type="ECO:0000256" key="5">
    <source>
        <dbReference type="SAM" id="MobiDB-lite"/>
    </source>
</evidence>
<evidence type="ECO:0000269" key="6">
    <source>
    </source>
</evidence>
<evidence type="ECO:0000303" key="7">
    <source>
    </source>
</evidence>
<evidence type="ECO:0000305" key="8"/>
<evidence type="ECO:0000305" key="9">
    <source>
    </source>
</evidence>